<comment type="similarity">
    <text evidence="1">Belongs to the UPF0145 family.</text>
</comment>
<proteinExistence type="inferred from homology"/>
<name>Y1287_LACJO</name>
<protein>
    <recommendedName>
        <fullName evidence="1">UPF0145 protein LJ_1287</fullName>
    </recommendedName>
</protein>
<accession>Q74J23</accession>
<evidence type="ECO:0000255" key="1">
    <source>
        <dbReference type="HAMAP-Rule" id="MF_00338"/>
    </source>
</evidence>
<reference key="1">
    <citation type="journal article" date="2004" name="Proc. Natl. Acad. Sci. U.S.A.">
        <title>The genome sequence of the probiotic intestinal bacterium Lactobacillus johnsonii NCC 533.</title>
        <authorList>
            <person name="Pridmore R.D."/>
            <person name="Berger B."/>
            <person name="Desiere F."/>
            <person name="Vilanova D."/>
            <person name="Barretto C."/>
            <person name="Pittet A.-C."/>
            <person name="Zwahlen M.-C."/>
            <person name="Rouvet M."/>
            <person name="Altermann E."/>
            <person name="Barrangou R."/>
            <person name="Mollet B."/>
            <person name="Mercenier A."/>
            <person name="Klaenhammer T."/>
            <person name="Arigoni F."/>
            <person name="Schell M.A."/>
        </authorList>
    </citation>
    <scope>NUCLEOTIDE SEQUENCE [LARGE SCALE GENOMIC DNA]</scope>
    <source>
        <strain>CNCM I-1225 / La1 / NCC 533</strain>
    </source>
</reference>
<sequence>MAEQILVTTTENIPGRKYEIIGEVFGVTTQSKNAIRDFGAGLKSIVGGEIKAYTSMLTESRDQSIARLRQNASEMGANAVVMMRFDSGSIAGDMQSVVAYGTAVKFID</sequence>
<organism>
    <name type="scientific">Lactobacillus johnsonii (strain CNCM I-12250 / La1 / NCC 533)</name>
    <dbReference type="NCBI Taxonomy" id="257314"/>
    <lineage>
        <taxon>Bacteria</taxon>
        <taxon>Bacillati</taxon>
        <taxon>Bacillota</taxon>
        <taxon>Bacilli</taxon>
        <taxon>Lactobacillales</taxon>
        <taxon>Lactobacillaceae</taxon>
        <taxon>Lactobacillus</taxon>
    </lineage>
</organism>
<feature type="chain" id="PRO_0000225831" description="UPF0145 protein LJ_1287">
    <location>
        <begin position="1"/>
        <end position="108"/>
    </location>
</feature>
<dbReference type="EMBL" id="AE017198">
    <property type="protein sequence ID" value="AAS09108.1"/>
    <property type="molecule type" value="Genomic_DNA"/>
</dbReference>
<dbReference type="RefSeq" id="WP_011162114.1">
    <property type="nucleotide sequence ID" value="NC_005362.1"/>
</dbReference>
<dbReference type="SMR" id="Q74J23"/>
<dbReference type="KEGG" id="ljo:LJ_1287"/>
<dbReference type="PATRIC" id="fig|257314.6.peg.1155"/>
<dbReference type="eggNOG" id="COG0393">
    <property type="taxonomic scope" value="Bacteria"/>
</dbReference>
<dbReference type="HOGENOM" id="CLU_117144_1_2_9"/>
<dbReference type="Proteomes" id="UP000000581">
    <property type="component" value="Chromosome"/>
</dbReference>
<dbReference type="Gene3D" id="3.30.110.70">
    <property type="entry name" value="Hypothetical protein apc22750. Chain B"/>
    <property type="match status" value="1"/>
</dbReference>
<dbReference type="HAMAP" id="MF_00338">
    <property type="entry name" value="UPF0145"/>
    <property type="match status" value="1"/>
</dbReference>
<dbReference type="InterPro" id="IPR035439">
    <property type="entry name" value="UPF0145_dom_sf"/>
</dbReference>
<dbReference type="InterPro" id="IPR002765">
    <property type="entry name" value="UPF0145_YbjQ-like"/>
</dbReference>
<dbReference type="PANTHER" id="PTHR34068:SF2">
    <property type="entry name" value="UPF0145 PROTEIN SCO3412"/>
    <property type="match status" value="1"/>
</dbReference>
<dbReference type="PANTHER" id="PTHR34068">
    <property type="entry name" value="UPF0145 PROTEIN YBJQ"/>
    <property type="match status" value="1"/>
</dbReference>
<dbReference type="Pfam" id="PF01906">
    <property type="entry name" value="YbjQ_1"/>
    <property type="match status" value="1"/>
</dbReference>
<dbReference type="SUPFAM" id="SSF117782">
    <property type="entry name" value="YbjQ-like"/>
    <property type="match status" value="1"/>
</dbReference>
<gene>
    <name type="ordered locus">LJ_1287</name>
</gene>